<accession>C3PP75</accession>
<dbReference type="EC" id="2.7.7.56" evidence="1"/>
<dbReference type="EMBL" id="CP001612">
    <property type="protein sequence ID" value="ACP53735.1"/>
    <property type="molecule type" value="Genomic_DNA"/>
</dbReference>
<dbReference type="RefSeq" id="WP_010977568.1">
    <property type="nucleotide sequence ID" value="NC_012633.1"/>
</dbReference>
<dbReference type="SMR" id="C3PP75"/>
<dbReference type="GeneID" id="928118"/>
<dbReference type="KEGG" id="raf:RAF_ORF0877"/>
<dbReference type="HOGENOM" id="CLU_050858_0_0_5"/>
<dbReference type="Proteomes" id="UP000002305">
    <property type="component" value="Chromosome"/>
</dbReference>
<dbReference type="GO" id="GO:0000175">
    <property type="term" value="F:3'-5'-RNA exonuclease activity"/>
    <property type="evidence" value="ECO:0007669"/>
    <property type="project" value="UniProtKB-UniRule"/>
</dbReference>
<dbReference type="GO" id="GO:0000049">
    <property type="term" value="F:tRNA binding"/>
    <property type="evidence" value="ECO:0007669"/>
    <property type="project" value="UniProtKB-UniRule"/>
</dbReference>
<dbReference type="GO" id="GO:0009022">
    <property type="term" value="F:tRNA nucleotidyltransferase activity"/>
    <property type="evidence" value="ECO:0007669"/>
    <property type="project" value="UniProtKB-UniRule"/>
</dbReference>
<dbReference type="GO" id="GO:0016075">
    <property type="term" value="P:rRNA catabolic process"/>
    <property type="evidence" value="ECO:0007669"/>
    <property type="project" value="UniProtKB-UniRule"/>
</dbReference>
<dbReference type="GO" id="GO:0006364">
    <property type="term" value="P:rRNA processing"/>
    <property type="evidence" value="ECO:0007669"/>
    <property type="project" value="UniProtKB-KW"/>
</dbReference>
<dbReference type="GO" id="GO:0008033">
    <property type="term" value="P:tRNA processing"/>
    <property type="evidence" value="ECO:0007669"/>
    <property type="project" value="UniProtKB-UniRule"/>
</dbReference>
<dbReference type="CDD" id="cd11362">
    <property type="entry name" value="RNase_PH_bact"/>
    <property type="match status" value="1"/>
</dbReference>
<dbReference type="FunFam" id="3.30.230.70:FF:000003">
    <property type="entry name" value="Ribonuclease PH"/>
    <property type="match status" value="1"/>
</dbReference>
<dbReference type="Gene3D" id="3.30.230.70">
    <property type="entry name" value="GHMP Kinase, N-terminal domain"/>
    <property type="match status" value="1"/>
</dbReference>
<dbReference type="HAMAP" id="MF_00564">
    <property type="entry name" value="RNase_PH"/>
    <property type="match status" value="1"/>
</dbReference>
<dbReference type="InterPro" id="IPR001247">
    <property type="entry name" value="ExoRNase_PH_dom1"/>
</dbReference>
<dbReference type="InterPro" id="IPR015847">
    <property type="entry name" value="ExoRNase_PH_dom2"/>
</dbReference>
<dbReference type="InterPro" id="IPR036345">
    <property type="entry name" value="ExoRNase_PH_dom2_sf"/>
</dbReference>
<dbReference type="InterPro" id="IPR027408">
    <property type="entry name" value="PNPase/RNase_PH_dom_sf"/>
</dbReference>
<dbReference type="InterPro" id="IPR020568">
    <property type="entry name" value="Ribosomal_Su5_D2-typ_SF"/>
</dbReference>
<dbReference type="InterPro" id="IPR050080">
    <property type="entry name" value="RNase_PH"/>
</dbReference>
<dbReference type="InterPro" id="IPR002381">
    <property type="entry name" value="RNase_PH_bac-type"/>
</dbReference>
<dbReference type="InterPro" id="IPR018336">
    <property type="entry name" value="RNase_PH_CS"/>
</dbReference>
<dbReference type="NCBIfam" id="TIGR01966">
    <property type="entry name" value="RNasePH"/>
    <property type="match status" value="1"/>
</dbReference>
<dbReference type="PANTHER" id="PTHR11953">
    <property type="entry name" value="EXOSOME COMPLEX COMPONENT"/>
    <property type="match status" value="1"/>
</dbReference>
<dbReference type="PANTHER" id="PTHR11953:SF0">
    <property type="entry name" value="EXOSOME COMPLEX COMPONENT RRP41"/>
    <property type="match status" value="1"/>
</dbReference>
<dbReference type="Pfam" id="PF01138">
    <property type="entry name" value="RNase_PH"/>
    <property type="match status" value="1"/>
</dbReference>
<dbReference type="Pfam" id="PF03725">
    <property type="entry name" value="RNase_PH_C"/>
    <property type="match status" value="1"/>
</dbReference>
<dbReference type="SUPFAM" id="SSF55666">
    <property type="entry name" value="Ribonuclease PH domain 2-like"/>
    <property type="match status" value="1"/>
</dbReference>
<dbReference type="SUPFAM" id="SSF54211">
    <property type="entry name" value="Ribosomal protein S5 domain 2-like"/>
    <property type="match status" value="1"/>
</dbReference>
<dbReference type="PROSITE" id="PS01277">
    <property type="entry name" value="RIBONUCLEASE_PH"/>
    <property type="match status" value="1"/>
</dbReference>
<keyword id="KW-0548">Nucleotidyltransferase</keyword>
<keyword id="KW-0694">RNA-binding</keyword>
<keyword id="KW-0698">rRNA processing</keyword>
<keyword id="KW-0808">Transferase</keyword>
<keyword id="KW-0819">tRNA processing</keyword>
<keyword id="KW-0820">tRNA-binding</keyword>
<feature type="chain" id="PRO_1000212069" description="Ribonuclease PH">
    <location>
        <begin position="1"/>
        <end position="239"/>
    </location>
</feature>
<feature type="binding site" evidence="1">
    <location>
        <position position="86"/>
    </location>
    <ligand>
        <name>phosphate</name>
        <dbReference type="ChEBI" id="CHEBI:43474"/>
        <note>substrate</note>
    </ligand>
</feature>
<feature type="binding site" evidence="1">
    <location>
        <begin position="124"/>
        <end position="126"/>
    </location>
    <ligand>
        <name>phosphate</name>
        <dbReference type="ChEBI" id="CHEBI:43474"/>
        <note>substrate</note>
    </ligand>
</feature>
<sequence length="239" mass="25935">MRQSGRKSNQLRPISLELSPLINAEGSCLIKIGNTHVMCSATCETTVPPFLRGQNQGWITAEYGMLPGSTSQRIKREAALGKQGGRTQEIQRLIGRAMRCVIDVRKLGERQIIIDCDVINADGGTRTAAITGSYVALHLAIRSLMKKRVLKVNPLISQIAAISCGIYKGEAILDLDYLEDSDADVDSNFVFAGNGNLIEVQGTAEKNPFSEEQFLAMLKLAKGGAAELFKLQNQVLLGS</sequence>
<comment type="function">
    <text evidence="1">Phosphorolytic 3'-5' exoribonuclease that plays an important role in tRNA 3'-end maturation. Removes nucleotide residues following the 3'-CCA terminus of tRNAs; can also add nucleotides to the ends of RNA molecules by using nucleoside diphosphates as substrates, but this may not be physiologically important. Probably plays a role in initiation of 16S rRNA degradation (leading to ribosome degradation) during starvation.</text>
</comment>
<comment type="catalytic activity">
    <reaction evidence="1">
        <text>tRNA(n+1) + phosphate = tRNA(n) + a ribonucleoside 5'-diphosphate</text>
        <dbReference type="Rhea" id="RHEA:10628"/>
        <dbReference type="Rhea" id="RHEA-COMP:17343"/>
        <dbReference type="Rhea" id="RHEA-COMP:17344"/>
        <dbReference type="ChEBI" id="CHEBI:43474"/>
        <dbReference type="ChEBI" id="CHEBI:57930"/>
        <dbReference type="ChEBI" id="CHEBI:173114"/>
        <dbReference type="EC" id="2.7.7.56"/>
    </reaction>
</comment>
<comment type="subunit">
    <text evidence="1">Homohexameric ring arranged as a trimer of dimers.</text>
</comment>
<comment type="similarity">
    <text evidence="1">Belongs to the RNase PH family.</text>
</comment>
<name>RNPH_RICAE</name>
<evidence type="ECO:0000255" key="1">
    <source>
        <dbReference type="HAMAP-Rule" id="MF_00564"/>
    </source>
</evidence>
<reference key="1">
    <citation type="journal article" date="2009" name="BMC Genomics">
        <title>Analysis of the Rickettsia africae genome reveals that virulence acquisition in Rickettsia species may be explained by genome reduction.</title>
        <authorList>
            <person name="Fournier P.-E."/>
            <person name="El Karkouri K."/>
            <person name="Leroy Q."/>
            <person name="Robert C."/>
            <person name="Giumelli B."/>
            <person name="Renesto P."/>
            <person name="Socolovschi C."/>
            <person name="Parola P."/>
            <person name="Audic S."/>
            <person name="Raoult D."/>
        </authorList>
    </citation>
    <scope>NUCLEOTIDE SEQUENCE [LARGE SCALE GENOMIC DNA]</scope>
    <source>
        <strain>ESF-5</strain>
    </source>
</reference>
<gene>
    <name evidence="1" type="primary">rph</name>
    <name type="ordered locus">RAF_ORF0877</name>
</gene>
<protein>
    <recommendedName>
        <fullName evidence="1">Ribonuclease PH</fullName>
        <shortName evidence="1">RNase PH</shortName>
        <ecNumber evidence="1">2.7.7.56</ecNumber>
    </recommendedName>
    <alternativeName>
        <fullName evidence="1">tRNA nucleotidyltransferase</fullName>
    </alternativeName>
</protein>
<organism>
    <name type="scientific">Rickettsia africae (strain ESF-5)</name>
    <dbReference type="NCBI Taxonomy" id="347255"/>
    <lineage>
        <taxon>Bacteria</taxon>
        <taxon>Pseudomonadati</taxon>
        <taxon>Pseudomonadota</taxon>
        <taxon>Alphaproteobacteria</taxon>
        <taxon>Rickettsiales</taxon>
        <taxon>Rickettsiaceae</taxon>
        <taxon>Rickettsieae</taxon>
        <taxon>Rickettsia</taxon>
        <taxon>spotted fever group</taxon>
    </lineage>
</organism>
<proteinExistence type="inferred from homology"/>